<accession>A8EZV2</accession>
<feature type="chain" id="PRO_1000017586" description="Large ribosomal subunit protein bL27">
    <location>
        <begin position="1"/>
        <end position="86"/>
    </location>
</feature>
<feature type="region of interest" description="Disordered" evidence="2">
    <location>
        <begin position="1"/>
        <end position="26"/>
    </location>
</feature>
<evidence type="ECO:0000255" key="1">
    <source>
        <dbReference type="HAMAP-Rule" id="MF_00539"/>
    </source>
</evidence>
<evidence type="ECO:0000256" key="2">
    <source>
        <dbReference type="SAM" id="MobiDB-lite"/>
    </source>
</evidence>
<evidence type="ECO:0000305" key="3"/>
<protein>
    <recommendedName>
        <fullName evidence="1">Large ribosomal subunit protein bL27</fullName>
    </recommendedName>
    <alternativeName>
        <fullName evidence="3">50S ribosomal protein L27</fullName>
    </alternativeName>
</protein>
<organism>
    <name type="scientific">Rickettsia canadensis (strain McKiel)</name>
    <dbReference type="NCBI Taxonomy" id="293613"/>
    <lineage>
        <taxon>Bacteria</taxon>
        <taxon>Pseudomonadati</taxon>
        <taxon>Pseudomonadota</taxon>
        <taxon>Alphaproteobacteria</taxon>
        <taxon>Rickettsiales</taxon>
        <taxon>Rickettsiaceae</taxon>
        <taxon>Rickettsieae</taxon>
        <taxon>Rickettsia</taxon>
        <taxon>belli group</taxon>
    </lineage>
</organism>
<dbReference type="EMBL" id="CP000409">
    <property type="protein sequence ID" value="ABV73885.1"/>
    <property type="molecule type" value="Genomic_DNA"/>
</dbReference>
<dbReference type="RefSeq" id="WP_012149080.1">
    <property type="nucleotide sequence ID" value="NC_009879.1"/>
</dbReference>
<dbReference type="SMR" id="A8EZV2"/>
<dbReference type="STRING" id="293613.A1E_04820"/>
<dbReference type="KEGG" id="rcm:A1E_04820"/>
<dbReference type="eggNOG" id="COG0211">
    <property type="taxonomic scope" value="Bacteria"/>
</dbReference>
<dbReference type="HOGENOM" id="CLU_095424_4_1_5"/>
<dbReference type="Proteomes" id="UP000007056">
    <property type="component" value="Chromosome"/>
</dbReference>
<dbReference type="GO" id="GO:1990904">
    <property type="term" value="C:ribonucleoprotein complex"/>
    <property type="evidence" value="ECO:0007669"/>
    <property type="project" value="UniProtKB-KW"/>
</dbReference>
<dbReference type="GO" id="GO:0005840">
    <property type="term" value="C:ribosome"/>
    <property type="evidence" value="ECO:0007669"/>
    <property type="project" value="UniProtKB-KW"/>
</dbReference>
<dbReference type="GO" id="GO:0003735">
    <property type="term" value="F:structural constituent of ribosome"/>
    <property type="evidence" value="ECO:0007669"/>
    <property type="project" value="InterPro"/>
</dbReference>
<dbReference type="GO" id="GO:0006412">
    <property type="term" value="P:translation"/>
    <property type="evidence" value="ECO:0007669"/>
    <property type="project" value="UniProtKB-UniRule"/>
</dbReference>
<dbReference type="FunFam" id="2.40.50.100:FF:000020">
    <property type="entry name" value="50S ribosomal protein L27"/>
    <property type="match status" value="1"/>
</dbReference>
<dbReference type="Gene3D" id="2.40.50.100">
    <property type="match status" value="1"/>
</dbReference>
<dbReference type="HAMAP" id="MF_00539">
    <property type="entry name" value="Ribosomal_bL27"/>
    <property type="match status" value="1"/>
</dbReference>
<dbReference type="InterPro" id="IPR001684">
    <property type="entry name" value="Ribosomal_bL27"/>
</dbReference>
<dbReference type="InterPro" id="IPR018261">
    <property type="entry name" value="Ribosomal_bL27_CS"/>
</dbReference>
<dbReference type="NCBIfam" id="TIGR00062">
    <property type="entry name" value="L27"/>
    <property type="match status" value="1"/>
</dbReference>
<dbReference type="PANTHER" id="PTHR15893:SF0">
    <property type="entry name" value="LARGE RIBOSOMAL SUBUNIT PROTEIN BL27M"/>
    <property type="match status" value="1"/>
</dbReference>
<dbReference type="PANTHER" id="PTHR15893">
    <property type="entry name" value="RIBOSOMAL PROTEIN L27"/>
    <property type="match status" value="1"/>
</dbReference>
<dbReference type="Pfam" id="PF01016">
    <property type="entry name" value="Ribosomal_L27"/>
    <property type="match status" value="1"/>
</dbReference>
<dbReference type="PRINTS" id="PR00063">
    <property type="entry name" value="RIBOSOMALL27"/>
</dbReference>
<dbReference type="SUPFAM" id="SSF110324">
    <property type="entry name" value="Ribosomal L27 protein-like"/>
    <property type="match status" value="1"/>
</dbReference>
<dbReference type="PROSITE" id="PS00831">
    <property type="entry name" value="RIBOSOMAL_L27"/>
    <property type="match status" value="1"/>
</dbReference>
<reference key="1">
    <citation type="submission" date="2007-09" db="EMBL/GenBank/DDBJ databases">
        <title>Complete genome sequence of Rickettsia canadensis.</title>
        <authorList>
            <person name="Madan A."/>
            <person name="Fahey J."/>
            <person name="Helton E."/>
            <person name="Ketteman M."/>
            <person name="Madan A."/>
            <person name="Rodrigues S."/>
            <person name="Sanchez A."/>
            <person name="Whiting M."/>
            <person name="Dasch G."/>
            <person name="Eremeeva M."/>
        </authorList>
    </citation>
    <scope>NUCLEOTIDE SEQUENCE [LARGE SCALE GENOMIC DNA]</scope>
    <source>
        <strain>McKiel</strain>
    </source>
</reference>
<sequence>MATKKAGGSSRNGRDSAGRRLGVKQSDGQYVIPGNIIVRQRGTKIHPGRNVGLGKDHTIFALIEGRVEFVTKRNHKVVNVKEIASA</sequence>
<comment type="similarity">
    <text evidence="1">Belongs to the bacterial ribosomal protein bL27 family.</text>
</comment>
<keyword id="KW-0687">Ribonucleoprotein</keyword>
<keyword id="KW-0689">Ribosomal protein</keyword>
<proteinExistence type="inferred from homology"/>
<gene>
    <name evidence="1" type="primary">rpmA</name>
    <name type="ordered locus">A1E_04820</name>
</gene>
<name>RL27_RICCK</name>